<gene>
    <name type="primary">PCGF5</name>
</gene>
<evidence type="ECO:0000250" key="1">
    <source>
        <dbReference type="UniProtKB" id="Q3UK78"/>
    </source>
</evidence>
<evidence type="ECO:0000250" key="2">
    <source>
        <dbReference type="UniProtKB" id="Q86SE9"/>
    </source>
</evidence>
<evidence type="ECO:0000255" key="3">
    <source>
        <dbReference type="PROSITE-ProRule" id="PRU00175"/>
    </source>
</evidence>
<evidence type="ECO:0000256" key="4">
    <source>
        <dbReference type="SAM" id="MobiDB-lite"/>
    </source>
</evidence>
<dbReference type="EMBL" id="BC126565">
    <property type="protein sequence ID" value="AAI26566.1"/>
    <property type="molecule type" value="mRNA"/>
</dbReference>
<dbReference type="RefSeq" id="NP_001071448.1">
    <property type="nucleotide sequence ID" value="NM_001077980.1"/>
</dbReference>
<dbReference type="SMR" id="A0JN86"/>
<dbReference type="FunCoup" id="A0JN86">
    <property type="interactions" value="380"/>
</dbReference>
<dbReference type="STRING" id="9913.ENSBTAP00000006533"/>
<dbReference type="PaxDb" id="9913-ENSBTAP00000006533"/>
<dbReference type="GeneID" id="528946"/>
<dbReference type="KEGG" id="bta:528946"/>
<dbReference type="CTD" id="84333"/>
<dbReference type="VEuPathDB" id="HostDB:ENSBTAG00000004964"/>
<dbReference type="eggNOG" id="KOG2660">
    <property type="taxonomic scope" value="Eukaryota"/>
</dbReference>
<dbReference type="HOGENOM" id="CLU_046427_4_1_1"/>
<dbReference type="InParanoid" id="A0JN86"/>
<dbReference type="OMA" id="GENGYPM"/>
<dbReference type="OrthoDB" id="1305878at2759"/>
<dbReference type="TreeFam" id="TF324206"/>
<dbReference type="Reactome" id="R-BTA-8939243">
    <property type="pathway name" value="RUNX1 interacts with co-factors whose precise effect on RUNX1 targets is not known"/>
</dbReference>
<dbReference type="Proteomes" id="UP000009136">
    <property type="component" value="Chromosome 26"/>
</dbReference>
<dbReference type="Bgee" id="ENSBTAG00000004964">
    <property type="expression patterns" value="Expressed in neutrophil and 108 other cell types or tissues"/>
</dbReference>
<dbReference type="GO" id="GO:0005654">
    <property type="term" value="C:nucleoplasm"/>
    <property type="evidence" value="ECO:0007669"/>
    <property type="project" value="UniProtKB-SubCell"/>
</dbReference>
<dbReference type="GO" id="GO:0031519">
    <property type="term" value="C:PcG protein complex"/>
    <property type="evidence" value="ECO:0000250"/>
    <property type="project" value="UniProtKB"/>
</dbReference>
<dbReference type="GO" id="GO:0035102">
    <property type="term" value="C:PRC1 complex"/>
    <property type="evidence" value="ECO:0000318"/>
    <property type="project" value="GO_Central"/>
</dbReference>
<dbReference type="GO" id="GO:0140862">
    <property type="term" value="F:histone H2AK119 ubiquitin ligase activity"/>
    <property type="evidence" value="ECO:0000250"/>
    <property type="project" value="UniProtKB"/>
</dbReference>
<dbReference type="GO" id="GO:0008270">
    <property type="term" value="F:zinc ion binding"/>
    <property type="evidence" value="ECO:0007669"/>
    <property type="project" value="UniProtKB-KW"/>
</dbReference>
<dbReference type="GO" id="GO:0060816">
    <property type="term" value="P:random inactivation of X chromosome"/>
    <property type="evidence" value="ECO:0000250"/>
    <property type="project" value="UniProtKB"/>
</dbReference>
<dbReference type="GO" id="GO:0006357">
    <property type="term" value="P:regulation of transcription by RNA polymerase II"/>
    <property type="evidence" value="ECO:0000318"/>
    <property type="project" value="GO_Central"/>
</dbReference>
<dbReference type="CDD" id="cd17084">
    <property type="entry name" value="RAWUL_PCGF5"/>
    <property type="match status" value="1"/>
</dbReference>
<dbReference type="CDD" id="cd16737">
    <property type="entry name" value="RING-HC_PCGF5"/>
    <property type="match status" value="1"/>
</dbReference>
<dbReference type="FunFam" id="3.10.20.90:FF:000088">
    <property type="entry name" value="polycomb group RING finger protein 5 isoform X1"/>
    <property type="match status" value="1"/>
</dbReference>
<dbReference type="FunFam" id="3.30.40.10:FF:000118">
    <property type="entry name" value="Putative polycomb group RING finger protein 5"/>
    <property type="match status" value="1"/>
</dbReference>
<dbReference type="Gene3D" id="3.10.20.90">
    <property type="entry name" value="Phosphatidylinositol 3-kinase Catalytic Subunit, Chain A, domain 1"/>
    <property type="match status" value="1"/>
</dbReference>
<dbReference type="Gene3D" id="3.30.40.10">
    <property type="entry name" value="Zinc/RING finger domain, C3HC4 (zinc finger)"/>
    <property type="match status" value="1"/>
</dbReference>
<dbReference type="InterPro" id="IPR051507">
    <property type="entry name" value="PcG_RING_finger"/>
</dbReference>
<dbReference type="InterPro" id="IPR032443">
    <property type="entry name" value="RAWUL"/>
</dbReference>
<dbReference type="InterPro" id="IPR001841">
    <property type="entry name" value="Znf_RING"/>
</dbReference>
<dbReference type="InterPro" id="IPR013083">
    <property type="entry name" value="Znf_RING/FYVE/PHD"/>
</dbReference>
<dbReference type="InterPro" id="IPR017907">
    <property type="entry name" value="Znf_RING_CS"/>
</dbReference>
<dbReference type="PANTHER" id="PTHR45893">
    <property type="entry name" value="POLYCOMB GROUP RING FINGER PROTEIN"/>
    <property type="match status" value="1"/>
</dbReference>
<dbReference type="Pfam" id="PF16207">
    <property type="entry name" value="RAWUL"/>
    <property type="match status" value="1"/>
</dbReference>
<dbReference type="Pfam" id="PF13923">
    <property type="entry name" value="zf-C3HC4_2"/>
    <property type="match status" value="1"/>
</dbReference>
<dbReference type="SMART" id="SM00184">
    <property type="entry name" value="RING"/>
    <property type="match status" value="1"/>
</dbReference>
<dbReference type="SUPFAM" id="SSF57850">
    <property type="entry name" value="RING/U-box"/>
    <property type="match status" value="1"/>
</dbReference>
<dbReference type="PROSITE" id="PS00518">
    <property type="entry name" value="ZF_RING_1"/>
    <property type="match status" value="1"/>
</dbReference>
<dbReference type="PROSITE" id="PS50089">
    <property type="entry name" value="ZF_RING_2"/>
    <property type="match status" value="1"/>
</dbReference>
<reference key="1">
    <citation type="submission" date="2006-10" db="EMBL/GenBank/DDBJ databases">
        <authorList>
            <consortium name="NIH - Mammalian Gene Collection (MGC) project"/>
        </authorList>
    </citation>
    <scope>NUCLEOTIDE SEQUENCE [LARGE SCALE MRNA]</scope>
    <source>
        <strain>Hereford</strain>
        <tissue>Fetal liver</tissue>
    </source>
</reference>
<comment type="function">
    <text evidence="1 2">Component of a Polycomb group (PcG) multiprotein PRC1-like complex, a complex class required to maintain the transcriptionally repressive state of many genes, including Hox genes, throughout development. PcG PRC1 complex acts via chromatin remodeling and modification of histones; it mediates monoubiquitination of histone H2A 'Lys-119', rendering chromatin heritably changed in its expressibility (By similarity). Within the PRC1-like complex, regulates RNF2 ubiquitin ligase activity (By similarity). Plays a redundant role with PCGF3 as part of a PRC1-like complex that mediates monoubiquitination of histone H2A 'Lys-119' on the X chromosome and is required for normal silencing of one copy of the X chromosome in XX females (By similarity).</text>
</comment>
<comment type="subunit">
    <text evidence="2">Component of a PRC1-like complex that contains PCGF5, RNF2 and UBE2D3. Interacts with RNF2; the interaction is direct. Interacts with CBX6, CBX7 and CBX8. Interacts with AUTS2; the interaction is direct. Identified in a complex that contains AUTS2, PCGF5, CSNK2B and RNF2.</text>
</comment>
<comment type="subcellular location">
    <subcellularLocation>
        <location evidence="1">Nucleus</location>
    </subcellularLocation>
    <subcellularLocation>
        <location evidence="1">Nucleus</location>
        <location evidence="1">Nucleoplasm</location>
    </subcellularLocation>
    <text evidence="1">Recruited by the non-coding RNA Xist to specific nuclear foci that probably correspond to the inactivated X chromosome.</text>
</comment>
<accession>A0JN86</accession>
<sequence length="255" mass="29642">MATQRKHLVKDFNPYITCYICKGYLIKPTTVTECLHTFCKTCIVQHFEDSNDCPRCGNQVHETNPLEMLRLDNTLEEIIFKLVPGLREQLERESEFWKKNKPQENGQDDMSKVDKPKVDEEGDENQDDKDYHRSDPQIAICLDCLRNNGQSGDNVVKGLMKKFIRCSTRVTVGTIKKFLSLKLKLPSSYELDVLCNGEIMGKDHTMEFIYMTRWRLRGENFRCLNCSASQVCSQDGPLYQSYPMVLQYRPRIDFG</sequence>
<proteinExistence type="evidence at transcript level"/>
<protein>
    <recommendedName>
        <fullName>Polycomb group RING finger protein 5</fullName>
    </recommendedName>
</protein>
<name>PCGF5_BOVIN</name>
<keyword id="KW-0479">Metal-binding</keyword>
<keyword id="KW-0539">Nucleus</keyword>
<keyword id="KW-1185">Reference proteome</keyword>
<keyword id="KW-0678">Repressor</keyword>
<keyword id="KW-0804">Transcription</keyword>
<keyword id="KW-0805">Transcription regulation</keyword>
<keyword id="KW-0862">Zinc</keyword>
<keyword id="KW-0863">Zinc-finger</keyword>
<feature type="chain" id="PRO_0000277867" description="Polycomb group RING finger protein 5">
    <location>
        <begin position="1"/>
        <end position="255"/>
    </location>
</feature>
<feature type="zinc finger region" description="RING-type" evidence="3">
    <location>
        <begin position="18"/>
        <end position="57"/>
    </location>
</feature>
<feature type="region of interest" description="Disordered" evidence="4">
    <location>
        <begin position="97"/>
        <end position="132"/>
    </location>
</feature>
<feature type="compositionally biased region" description="Basic and acidic residues" evidence="4">
    <location>
        <begin position="109"/>
        <end position="119"/>
    </location>
</feature>
<organism>
    <name type="scientific">Bos taurus</name>
    <name type="common">Bovine</name>
    <dbReference type="NCBI Taxonomy" id="9913"/>
    <lineage>
        <taxon>Eukaryota</taxon>
        <taxon>Metazoa</taxon>
        <taxon>Chordata</taxon>
        <taxon>Craniata</taxon>
        <taxon>Vertebrata</taxon>
        <taxon>Euteleostomi</taxon>
        <taxon>Mammalia</taxon>
        <taxon>Eutheria</taxon>
        <taxon>Laurasiatheria</taxon>
        <taxon>Artiodactyla</taxon>
        <taxon>Ruminantia</taxon>
        <taxon>Pecora</taxon>
        <taxon>Bovidae</taxon>
        <taxon>Bovinae</taxon>
        <taxon>Bos</taxon>
    </lineage>
</organism>